<keyword id="KW-0965">Cell junction</keyword>
<keyword id="KW-0472">Membrane</keyword>
<keyword id="KW-1185">Reference proteome</keyword>
<keyword id="KW-0812">Transmembrane</keyword>
<keyword id="KW-1133">Transmembrane helix</keyword>
<accession>Q6PBE5</accession>
<reference key="1">
    <citation type="submission" date="2003-10" db="EMBL/GenBank/DDBJ databases">
        <authorList>
            <consortium name="NIH - Xenopus Gene Collection (XGC) project"/>
        </authorList>
    </citation>
    <scope>NUCLEOTIDE SEQUENCE [LARGE SCALE MRNA]</scope>
    <source>
        <tissue>Embryo</tissue>
    </source>
</reference>
<comment type="function">
    <text evidence="1 2">Regulates cell junction organization in epithelial cells. May play a role in the transition from adherens junction to tight junction assembly.</text>
</comment>
<comment type="subcellular location">
    <subcellularLocation>
        <location evidence="4">Membrane</location>
        <topology evidence="4">Multi-pass membrane protein</topology>
    </subcellularLocation>
    <subcellularLocation>
        <location evidence="2">Cell junction</location>
        <location evidence="2">Adherens junction</location>
    </subcellularLocation>
</comment>
<comment type="similarity">
    <text evidence="4">Belongs to the TMEM47 family.</text>
</comment>
<sequence>MASSASGMEEVRSSVLTPLKLVGLVCIFLALCLDIGAVLSPAWVTADNQYYLSLWESCKKAENLWICDSTLESDWQIATLALLLGGAAIILIAFLVGLISICVGSRRRFYRPVAVMLFAAVVLQVCGLVLYPIKFIETVTLKIYHEFNWGYGLAWGATIFSFGGAILYCLNPKNYEDYY</sequence>
<protein>
    <recommendedName>
        <fullName>Transmembrane protein 47</fullName>
    </recommendedName>
    <alternativeName>
        <fullName>Transmembrane 4 superfamily member 10</fullName>
    </alternativeName>
</protein>
<dbReference type="EMBL" id="BC059749">
    <property type="protein sequence ID" value="AAH59749.1"/>
    <property type="molecule type" value="mRNA"/>
</dbReference>
<dbReference type="RefSeq" id="NP_988899.1">
    <property type="nucleotide sequence ID" value="NM_203568.1"/>
</dbReference>
<dbReference type="SMR" id="Q6PBE5"/>
<dbReference type="FunCoup" id="Q6PBE5">
    <property type="interactions" value="562"/>
</dbReference>
<dbReference type="STRING" id="8364.ENSXETP00000010974"/>
<dbReference type="PaxDb" id="8364-ENSXETP00000056751"/>
<dbReference type="DNASU" id="394494"/>
<dbReference type="GeneID" id="394494"/>
<dbReference type="KEGG" id="xtr:394494"/>
<dbReference type="AGR" id="Xenbase:XB-GENE-951338"/>
<dbReference type="CTD" id="83604"/>
<dbReference type="Xenbase" id="XB-GENE-951338">
    <property type="gene designation" value="tmem47"/>
</dbReference>
<dbReference type="eggNOG" id="KOG4671">
    <property type="taxonomic scope" value="Eukaryota"/>
</dbReference>
<dbReference type="HOGENOM" id="CLU_120054_1_0_1"/>
<dbReference type="InParanoid" id="Q6PBE5"/>
<dbReference type="OMA" id="SWQCSST"/>
<dbReference type="OrthoDB" id="8655982at2759"/>
<dbReference type="PhylomeDB" id="Q6PBE5"/>
<dbReference type="TreeFam" id="TF312855"/>
<dbReference type="Proteomes" id="UP000008143">
    <property type="component" value="Chromosome 2"/>
</dbReference>
<dbReference type="Bgee" id="ENSXETG00000027069">
    <property type="expression patterns" value="Expressed in heart and 8 other cell types or tissues"/>
</dbReference>
<dbReference type="GO" id="GO:0005912">
    <property type="term" value="C:adherens junction"/>
    <property type="evidence" value="ECO:0007669"/>
    <property type="project" value="UniProtKB-SubCell"/>
</dbReference>
<dbReference type="GO" id="GO:0016020">
    <property type="term" value="C:membrane"/>
    <property type="evidence" value="ECO:0007669"/>
    <property type="project" value="UniProtKB-SubCell"/>
</dbReference>
<dbReference type="FunFam" id="1.20.140.150:FF:000010">
    <property type="entry name" value="transmembrane protein 47"/>
    <property type="match status" value="1"/>
</dbReference>
<dbReference type="Gene3D" id="1.20.140.150">
    <property type="match status" value="1"/>
</dbReference>
<dbReference type="InterPro" id="IPR015664">
    <property type="entry name" value="P53_induced"/>
</dbReference>
<dbReference type="PANTHER" id="PTHR14399">
    <property type="entry name" value="P53-INDUCED PROTEIN RELATED"/>
    <property type="match status" value="1"/>
</dbReference>
<dbReference type="PANTHER" id="PTHR14399:SF3">
    <property type="entry name" value="TRANSMEMBRANE PROTEIN 47"/>
    <property type="match status" value="1"/>
</dbReference>
<name>TMM47_XENTR</name>
<evidence type="ECO:0000250" key="1">
    <source>
        <dbReference type="UniProtKB" id="Q9JJG6"/>
    </source>
</evidence>
<evidence type="ECO:0000250" key="2">
    <source>
        <dbReference type="UniProtKB" id="Q9XSV3"/>
    </source>
</evidence>
<evidence type="ECO:0000255" key="3"/>
<evidence type="ECO:0000305" key="4"/>
<feature type="chain" id="PRO_0000072576" description="Transmembrane protein 47">
    <location>
        <begin position="1"/>
        <end position="179"/>
    </location>
</feature>
<feature type="transmembrane region" description="Helical" evidence="3">
    <location>
        <begin position="21"/>
        <end position="41"/>
    </location>
</feature>
<feature type="transmembrane region" description="Helical" evidence="3">
    <location>
        <begin position="81"/>
        <end position="101"/>
    </location>
</feature>
<feature type="transmembrane region" description="Helical" evidence="3">
    <location>
        <begin position="113"/>
        <end position="133"/>
    </location>
</feature>
<feature type="transmembrane region" description="Helical" evidence="3">
    <location>
        <begin position="150"/>
        <end position="170"/>
    </location>
</feature>
<gene>
    <name type="primary">tmem47</name>
    <name type="synonym">tm4sf10</name>
</gene>
<proteinExistence type="evidence at transcript level"/>
<organism>
    <name type="scientific">Xenopus tropicalis</name>
    <name type="common">Western clawed frog</name>
    <name type="synonym">Silurana tropicalis</name>
    <dbReference type="NCBI Taxonomy" id="8364"/>
    <lineage>
        <taxon>Eukaryota</taxon>
        <taxon>Metazoa</taxon>
        <taxon>Chordata</taxon>
        <taxon>Craniata</taxon>
        <taxon>Vertebrata</taxon>
        <taxon>Euteleostomi</taxon>
        <taxon>Amphibia</taxon>
        <taxon>Batrachia</taxon>
        <taxon>Anura</taxon>
        <taxon>Pipoidea</taxon>
        <taxon>Pipidae</taxon>
        <taxon>Xenopodinae</taxon>
        <taxon>Xenopus</taxon>
        <taxon>Silurana</taxon>
    </lineage>
</organism>